<protein>
    <recommendedName>
        <fullName evidence="1">Large ribosomal subunit protein bL20</fullName>
    </recommendedName>
    <alternativeName>
        <fullName evidence="2">50S ribosomal protein L20</fullName>
    </alternativeName>
</protein>
<name>RL20_CLOBM</name>
<gene>
    <name evidence="1" type="primary">rplT</name>
    <name type="ordered locus">CLK_2527</name>
</gene>
<organism>
    <name type="scientific">Clostridium botulinum (strain Loch Maree / Type A3)</name>
    <dbReference type="NCBI Taxonomy" id="498214"/>
    <lineage>
        <taxon>Bacteria</taxon>
        <taxon>Bacillati</taxon>
        <taxon>Bacillota</taxon>
        <taxon>Clostridia</taxon>
        <taxon>Eubacteriales</taxon>
        <taxon>Clostridiaceae</taxon>
        <taxon>Clostridium</taxon>
    </lineage>
</organism>
<accession>B1L0T4</accession>
<proteinExistence type="inferred from homology"/>
<feature type="chain" id="PRO_1000122297" description="Large ribosomal subunit protein bL20">
    <location>
        <begin position="1"/>
        <end position="119"/>
    </location>
</feature>
<reference key="1">
    <citation type="journal article" date="2007" name="PLoS ONE">
        <title>Analysis of the neurotoxin complex genes in Clostridium botulinum A1-A4 and B1 strains: BoNT/A3, /Ba4 and /B1 clusters are located within plasmids.</title>
        <authorList>
            <person name="Smith T.J."/>
            <person name="Hill K.K."/>
            <person name="Foley B.T."/>
            <person name="Detter J.C."/>
            <person name="Munk A.C."/>
            <person name="Bruce D.C."/>
            <person name="Doggett N.A."/>
            <person name="Smith L.A."/>
            <person name="Marks J.D."/>
            <person name="Xie G."/>
            <person name="Brettin T.S."/>
        </authorList>
    </citation>
    <scope>NUCLEOTIDE SEQUENCE [LARGE SCALE GENOMIC DNA]</scope>
    <source>
        <strain>Loch Maree / Type A3</strain>
    </source>
</reference>
<dbReference type="EMBL" id="CP000962">
    <property type="protein sequence ID" value="ACA57001.1"/>
    <property type="molecule type" value="Genomic_DNA"/>
</dbReference>
<dbReference type="RefSeq" id="WP_003386545.1">
    <property type="nucleotide sequence ID" value="NC_010520.1"/>
</dbReference>
<dbReference type="SMR" id="B1L0T4"/>
<dbReference type="GeneID" id="92939856"/>
<dbReference type="KEGG" id="cbl:CLK_2527"/>
<dbReference type="HOGENOM" id="CLU_123265_0_1_9"/>
<dbReference type="GO" id="GO:1990904">
    <property type="term" value="C:ribonucleoprotein complex"/>
    <property type="evidence" value="ECO:0007669"/>
    <property type="project" value="UniProtKB-KW"/>
</dbReference>
<dbReference type="GO" id="GO:0005840">
    <property type="term" value="C:ribosome"/>
    <property type="evidence" value="ECO:0007669"/>
    <property type="project" value="UniProtKB-KW"/>
</dbReference>
<dbReference type="GO" id="GO:0019843">
    <property type="term" value="F:rRNA binding"/>
    <property type="evidence" value="ECO:0007669"/>
    <property type="project" value="UniProtKB-UniRule"/>
</dbReference>
<dbReference type="GO" id="GO:0003735">
    <property type="term" value="F:structural constituent of ribosome"/>
    <property type="evidence" value="ECO:0007669"/>
    <property type="project" value="InterPro"/>
</dbReference>
<dbReference type="GO" id="GO:0000027">
    <property type="term" value="P:ribosomal large subunit assembly"/>
    <property type="evidence" value="ECO:0007669"/>
    <property type="project" value="UniProtKB-UniRule"/>
</dbReference>
<dbReference type="GO" id="GO:0006412">
    <property type="term" value="P:translation"/>
    <property type="evidence" value="ECO:0007669"/>
    <property type="project" value="InterPro"/>
</dbReference>
<dbReference type="CDD" id="cd07026">
    <property type="entry name" value="Ribosomal_L20"/>
    <property type="match status" value="1"/>
</dbReference>
<dbReference type="FunFam" id="1.10.1900.20:FF:000001">
    <property type="entry name" value="50S ribosomal protein L20"/>
    <property type="match status" value="1"/>
</dbReference>
<dbReference type="Gene3D" id="6.10.160.10">
    <property type="match status" value="1"/>
</dbReference>
<dbReference type="Gene3D" id="1.10.1900.20">
    <property type="entry name" value="Ribosomal protein L20"/>
    <property type="match status" value="1"/>
</dbReference>
<dbReference type="HAMAP" id="MF_00382">
    <property type="entry name" value="Ribosomal_bL20"/>
    <property type="match status" value="1"/>
</dbReference>
<dbReference type="InterPro" id="IPR005813">
    <property type="entry name" value="Ribosomal_bL20"/>
</dbReference>
<dbReference type="InterPro" id="IPR049946">
    <property type="entry name" value="RIBOSOMAL_L20_CS"/>
</dbReference>
<dbReference type="InterPro" id="IPR035566">
    <property type="entry name" value="Ribosomal_protein_bL20_C"/>
</dbReference>
<dbReference type="NCBIfam" id="TIGR01032">
    <property type="entry name" value="rplT_bact"/>
    <property type="match status" value="1"/>
</dbReference>
<dbReference type="PANTHER" id="PTHR10986">
    <property type="entry name" value="39S RIBOSOMAL PROTEIN L20"/>
    <property type="match status" value="1"/>
</dbReference>
<dbReference type="Pfam" id="PF00453">
    <property type="entry name" value="Ribosomal_L20"/>
    <property type="match status" value="1"/>
</dbReference>
<dbReference type="PRINTS" id="PR00062">
    <property type="entry name" value="RIBOSOMALL20"/>
</dbReference>
<dbReference type="SUPFAM" id="SSF74731">
    <property type="entry name" value="Ribosomal protein L20"/>
    <property type="match status" value="1"/>
</dbReference>
<dbReference type="PROSITE" id="PS00937">
    <property type="entry name" value="RIBOSOMAL_L20"/>
    <property type="match status" value="1"/>
</dbReference>
<keyword id="KW-0687">Ribonucleoprotein</keyword>
<keyword id="KW-0689">Ribosomal protein</keyword>
<keyword id="KW-0694">RNA-binding</keyword>
<keyword id="KW-0699">rRNA-binding</keyword>
<sequence length="119" mass="13584">MARVKRAMNARKRHKKVLKLAKGYYGGKSKLFKTANESVIRALRNAYVGRKLKKRDYRKLWIARINAATRMNGLSYSKFMNGIKNAGIDINRKMLSEIAINDPKAFAELVDVAKKQLNA</sequence>
<evidence type="ECO:0000255" key="1">
    <source>
        <dbReference type="HAMAP-Rule" id="MF_00382"/>
    </source>
</evidence>
<evidence type="ECO:0000305" key="2"/>
<comment type="function">
    <text evidence="1">Binds directly to 23S ribosomal RNA and is necessary for the in vitro assembly process of the 50S ribosomal subunit. It is not involved in the protein synthesizing functions of that subunit.</text>
</comment>
<comment type="similarity">
    <text evidence="1">Belongs to the bacterial ribosomal protein bL20 family.</text>
</comment>